<reference key="1">
    <citation type="journal article" date="2002" name="Biochim. Biophys. Acta">
        <title>Chloroplast ribosomal S14 protein transcript is edited to create a translation initiation codon in the moss Physcomitrella patens.</title>
        <authorList>
            <person name="Miyata Y."/>
            <person name="Sugiura C."/>
            <person name="Kobayashi Y."/>
            <person name="Hagiwara M."/>
            <person name="Sugita M."/>
        </authorList>
    </citation>
    <scope>NUCLEOTIDE SEQUENCE [GENOMIC DNA]</scope>
    <source>
        <tissue>Protonema</tissue>
    </source>
</reference>
<reference key="2">
    <citation type="journal article" date="2003" name="Nucleic Acids Res.">
        <title>Complete chloroplast DNA sequence of the moss Physcomitrella patens: evidence for the loss and relocation of rpoA from the chloroplast to the nucleus.</title>
        <authorList>
            <person name="Sugiura C."/>
            <person name="Kobayashi Y."/>
            <person name="Setsuyuki A."/>
            <person name="Sugita C."/>
            <person name="Sugita M."/>
        </authorList>
    </citation>
    <scope>NUCLEOTIDE SEQUENCE [LARGE SCALE GENOMIC DNA]</scope>
    <source>
        <strain>cv. Gransden 2004</strain>
    </source>
</reference>
<gene>
    <name evidence="1" type="primary">psaA</name>
</gene>
<comment type="function">
    <text>PsaA and PsaB bind P700, the primary electron donor of photosystem I (PSI), as well as the electron acceptors A0, A1 and FX. PSI is a plastocyanin-ferredoxin oxidoreductase, converting photonic excitation into a charge separation, which transfers an electron from the donor P700 chlorophyll pair to the spectroscopically characterized acceptors A0, A1, FX, FA and FB in turn. Oxidized P700 is reduced on the lumenal side of the thylakoid membrane by plastocyanin.</text>
</comment>
<comment type="catalytic activity">
    <reaction evidence="1">
        <text>reduced [plastocyanin] + hnu + oxidized [2Fe-2S]-[ferredoxin] = oxidized [plastocyanin] + reduced [2Fe-2S]-[ferredoxin]</text>
        <dbReference type="Rhea" id="RHEA:30407"/>
        <dbReference type="Rhea" id="RHEA-COMP:10000"/>
        <dbReference type="Rhea" id="RHEA-COMP:10001"/>
        <dbReference type="Rhea" id="RHEA-COMP:10039"/>
        <dbReference type="Rhea" id="RHEA-COMP:10040"/>
        <dbReference type="ChEBI" id="CHEBI:29036"/>
        <dbReference type="ChEBI" id="CHEBI:30212"/>
        <dbReference type="ChEBI" id="CHEBI:33737"/>
        <dbReference type="ChEBI" id="CHEBI:33738"/>
        <dbReference type="ChEBI" id="CHEBI:49552"/>
        <dbReference type="EC" id="1.97.1.12"/>
    </reaction>
</comment>
<comment type="cofactor">
    <text evidence="1">P700 is a chlorophyll a/chlorophyll a' dimer, A0 is one or more chlorophyll a, A1 is one or both phylloquinones and FX is a shared 4Fe-4S iron-sulfur center.</text>
</comment>
<comment type="subunit">
    <text evidence="1">The PsaA/B heterodimer binds the P700 chlorophyll special pair and subsequent electron acceptors. PSI consists of a core antenna complex that captures photons, and an electron transfer chain that converts photonic excitation into a charge separation. The eukaryotic PSI reaction center is composed of at least 11 subunits.</text>
</comment>
<comment type="subcellular location">
    <subcellularLocation>
        <location evidence="1">Plastid</location>
        <location evidence="1">Chloroplast thylakoid membrane</location>
        <topology evidence="1">Multi-pass membrane protein</topology>
    </subcellularLocation>
</comment>
<comment type="similarity">
    <text evidence="1">Belongs to the PsaA/PsaB family.</text>
</comment>
<sequence length="750" mass="83140">MTIRSPEPEVKIMVEKDPVKTSFEKWAKPGHFSRTLAKGPNTTTWIWNLHADAHDFDSHTNDLEEISRKVFSAHFGQLAVIFIWLSGMYFHGARFSNYEAWLSDPTHIKPSAQVVWPIVGQKILNGDVGGGFQGIQITSGFFQLWRASGITSELQLYTTAIGGLIFAALMLFAGWFHYHKAAPKLAWFQNVESMLNHHLAGLLGLGSLAWAGHQVHVSLPINRLLDAGVDPKEIPLPHEFILNRDLLAQLYPSFSKGLTPFFTLNWSEYSDFLTFRGGLNPVTGGLWLTDTAHHHLAIAVLFLVAGHMYRTNFGIGHSMKEILEAHKGPFTGEGHKGLYEILTTSWHAQLAINLAMLGSLTIIVAHHMYAMPPYPYLATDYATQLSLFTHHMWIGGFLVVGAAAHAAIFMVRDYDPTTQYNNLLDRVLRHRDAIISHLNWVCIFLGFHSFGLYIHNDTMSALGRPQDMFSDTAIQLQPVFAQWIQNTHALAPSLTAPNATASTSLTWGGGDLVAVGGKVALLPIPLGTADFLVHHIHAFTIHVTVLILLKGVLFARSSRLIPDKANLGFRFPCDGPGRGGTCQVSAWDHVFLGLFWMYNAISVVIFHFSWKMQSDVWGSISDQGVVTHITGGNFAQSSITINGWLRDFLWAQASQVIQSYGSSLSAYGLLFLGAHFVWAFSLMFLFSGRGYWQELIESIVWAHNKLKVAPAIQPRALSIVQGRAVGVAHYLLGGIATTWAFFLARIISVG</sequence>
<geneLocation type="chloroplast"/>
<evidence type="ECO:0000255" key="1">
    <source>
        <dbReference type="HAMAP-Rule" id="MF_00458"/>
    </source>
</evidence>
<evidence type="ECO:0007829" key="2">
    <source>
        <dbReference type="PDB" id="6L35"/>
    </source>
</evidence>
<evidence type="ECO:0007829" key="3">
    <source>
        <dbReference type="PDB" id="7KSQ"/>
    </source>
</evidence>
<evidence type="ECO:0007829" key="4">
    <source>
        <dbReference type="PDB" id="7XQP"/>
    </source>
</evidence>
<evidence type="ECO:0007829" key="5">
    <source>
        <dbReference type="PDB" id="8HTU"/>
    </source>
</evidence>
<name>PSAA_PHYPA</name>
<protein>
    <recommendedName>
        <fullName evidence="1">Photosystem I P700 chlorophyll a apoprotein A1</fullName>
        <ecNumber evidence="1">1.97.1.12</ecNumber>
    </recommendedName>
    <alternativeName>
        <fullName evidence="1">PSI-A</fullName>
    </alternativeName>
    <alternativeName>
        <fullName evidence="1">PsaA</fullName>
    </alternativeName>
</protein>
<accession>Q8MFA3</accession>
<keyword id="KW-0002">3D-structure</keyword>
<keyword id="KW-0004">4Fe-4S</keyword>
<keyword id="KW-0148">Chlorophyll</keyword>
<keyword id="KW-0150">Chloroplast</keyword>
<keyword id="KW-0157">Chromophore</keyword>
<keyword id="KW-0249">Electron transport</keyword>
<keyword id="KW-0408">Iron</keyword>
<keyword id="KW-0411">Iron-sulfur</keyword>
<keyword id="KW-0460">Magnesium</keyword>
<keyword id="KW-0472">Membrane</keyword>
<keyword id="KW-0479">Metal-binding</keyword>
<keyword id="KW-0560">Oxidoreductase</keyword>
<keyword id="KW-0602">Photosynthesis</keyword>
<keyword id="KW-0603">Photosystem I</keyword>
<keyword id="KW-0934">Plastid</keyword>
<keyword id="KW-1185">Reference proteome</keyword>
<keyword id="KW-0793">Thylakoid</keyword>
<keyword id="KW-0812">Transmembrane</keyword>
<keyword id="KW-1133">Transmembrane helix</keyword>
<keyword id="KW-0813">Transport</keyword>
<proteinExistence type="evidence at protein level"/>
<feature type="chain" id="PRO_0000088569" description="Photosystem I P700 chlorophyll a apoprotein A1">
    <location>
        <begin position="1"/>
        <end position="750"/>
    </location>
</feature>
<feature type="transmembrane region" description="Helical; Name=I" evidence="1">
    <location>
        <begin position="70"/>
        <end position="93"/>
    </location>
</feature>
<feature type="transmembrane region" description="Helical; Name=II" evidence="1">
    <location>
        <begin position="156"/>
        <end position="179"/>
    </location>
</feature>
<feature type="transmembrane region" description="Helical; Name=III" evidence="1">
    <location>
        <begin position="195"/>
        <end position="219"/>
    </location>
</feature>
<feature type="transmembrane region" description="Helical; Name=IV" evidence="1">
    <location>
        <begin position="291"/>
        <end position="309"/>
    </location>
</feature>
<feature type="transmembrane region" description="Helical; Name=V" evidence="1">
    <location>
        <begin position="346"/>
        <end position="369"/>
    </location>
</feature>
<feature type="transmembrane region" description="Helical; Name=VI" evidence="1">
    <location>
        <begin position="385"/>
        <end position="411"/>
    </location>
</feature>
<feature type="transmembrane region" description="Helical; Name=VII" evidence="1">
    <location>
        <begin position="433"/>
        <end position="455"/>
    </location>
</feature>
<feature type="transmembrane region" description="Helical; Name=VIII" evidence="1">
    <location>
        <begin position="531"/>
        <end position="549"/>
    </location>
</feature>
<feature type="transmembrane region" description="Helical; Name=IX" evidence="1">
    <location>
        <begin position="589"/>
        <end position="610"/>
    </location>
</feature>
<feature type="transmembrane region" description="Helical; Name=X" evidence="1">
    <location>
        <begin position="664"/>
        <end position="686"/>
    </location>
</feature>
<feature type="transmembrane region" description="Helical; Name=XI" evidence="1">
    <location>
        <begin position="724"/>
        <end position="744"/>
    </location>
</feature>
<feature type="binding site" evidence="1">
    <location>
        <position position="573"/>
    </location>
    <ligand>
        <name>[4Fe-4S] cluster</name>
        <dbReference type="ChEBI" id="CHEBI:49883"/>
        <note>ligand shared between dimeric partners</note>
    </ligand>
</feature>
<feature type="binding site" evidence="1">
    <location>
        <position position="582"/>
    </location>
    <ligand>
        <name>[4Fe-4S] cluster</name>
        <dbReference type="ChEBI" id="CHEBI:49883"/>
        <note>ligand shared between dimeric partners</note>
    </ligand>
</feature>
<feature type="binding site" description="axial binding residue" evidence="1">
    <location>
        <position position="675"/>
    </location>
    <ligand>
        <name>chlorophyll a'</name>
        <dbReference type="ChEBI" id="CHEBI:189419"/>
        <label>A1</label>
    </ligand>
    <ligandPart>
        <name>Mg</name>
        <dbReference type="ChEBI" id="CHEBI:25107"/>
    </ligandPart>
</feature>
<feature type="binding site" description="axial binding residue" evidence="1">
    <location>
        <position position="683"/>
    </location>
    <ligand>
        <name>chlorophyll a</name>
        <dbReference type="ChEBI" id="CHEBI:58416"/>
        <label>A3</label>
    </ligand>
    <ligandPart>
        <name>Mg</name>
        <dbReference type="ChEBI" id="CHEBI:25107"/>
    </ligandPart>
</feature>
<feature type="binding site" evidence="1">
    <location>
        <position position="691"/>
    </location>
    <ligand>
        <name>chlorophyll a</name>
        <dbReference type="ChEBI" id="CHEBI:58416"/>
        <label>A3</label>
    </ligand>
</feature>
<feature type="binding site" evidence="1">
    <location>
        <position position="692"/>
    </location>
    <ligand>
        <name>phylloquinone</name>
        <dbReference type="ChEBI" id="CHEBI:18067"/>
        <label>A</label>
    </ligand>
</feature>
<feature type="strand" evidence="4">
    <location>
        <begin position="14"/>
        <end position="17"/>
    </location>
</feature>
<feature type="helix" evidence="4">
    <location>
        <begin position="25"/>
        <end position="27"/>
    </location>
</feature>
<feature type="turn" evidence="4">
    <location>
        <begin position="29"/>
        <end position="32"/>
    </location>
</feature>
<feature type="helix" evidence="4">
    <location>
        <begin position="36"/>
        <end position="38"/>
    </location>
</feature>
<feature type="helix" evidence="4">
    <location>
        <begin position="44"/>
        <end position="51"/>
    </location>
</feature>
<feature type="strand" evidence="5">
    <location>
        <begin position="52"/>
        <end position="54"/>
    </location>
</feature>
<feature type="helix" evidence="4">
    <location>
        <begin position="56"/>
        <end position="58"/>
    </location>
</feature>
<feature type="helix" evidence="4">
    <location>
        <begin position="63"/>
        <end position="94"/>
    </location>
</feature>
<feature type="helix" evidence="4">
    <location>
        <begin position="98"/>
        <end position="103"/>
    </location>
</feature>
<feature type="turn" evidence="4">
    <location>
        <begin position="105"/>
        <end position="107"/>
    </location>
</feature>
<feature type="strand" evidence="4">
    <location>
        <begin position="111"/>
        <end position="113"/>
    </location>
</feature>
<feature type="strand" evidence="4">
    <location>
        <begin position="117"/>
        <end position="120"/>
    </location>
</feature>
<feature type="helix" evidence="4">
    <location>
        <begin position="121"/>
        <end position="124"/>
    </location>
</feature>
<feature type="strand" evidence="4">
    <location>
        <begin position="125"/>
        <end position="127"/>
    </location>
</feature>
<feature type="strand" evidence="4">
    <location>
        <begin position="129"/>
        <end position="131"/>
    </location>
</feature>
<feature type="strand" evidence="4">
    <location>
        <begin position="133"/>
        <end position="136"/>
    </location>
</feature>
<feature type="helix" evidence="4">
    <location>
        <begin position="141"/>
        <end position="148"/>
    </location>
</feature>
<feature type="helix" evidence="4">
    <location>
        <begin position="153"/>
        <end position="179"/>
    </location>
</feature>
<feature type="strand" evidence="4">
    <location>
        <begin position="181"/>
        <end position="183"/>
    </location>
</feature>
<feature type="helix" evidence="4">
    <location>
        <begin position="185"/>
        <end position="188"/>
    </location>
</feature>
<feature type="helix" evidence="4">
    <location>
        <begin position="191"/>
        <end position="216"/>
    </location>
</feature>
<feature type="helix" evidence="4">
    <location>
        <begin position="218"/>
        <end position="227"/>
    </location>
</feature>
<feature type="helix" evidence="4">
    <location>
        <begin position="231"/>
        <end position="233"/>
    </location>
</feature>
<feature type="helix" evidence="4">
    <location>
        <begin position="239"/>
        <end position="242"/>
    </location>
</feature>
<feature type="helix" evidence="4">
    <location>
        <begin position="244"/>
        <end position="250"/>
    </location>
</feature>
<feature type="helix" evidence="4">
    <location>
        <begin position="252"/>
        <end position="256"/>
    </location>
</feature>
<feature type="helix" evidence="4">
    <location>
        <begin position="259"/>
        <end position="262"/>
    </location>
</feature>
<feature type="helix" evidence="4">
    <location>
        <begin position="266"/>
        <end position="269"/>
    </location>
</feature>
<feature type="turn" evidence="4">
    <location>
        <begin position="270"/>
        <end position="272"/>
    </location>
</feature>
<feature type="turn" evidence="4">
    <location>
        <begin position="281"/>
        <end position="283"/>
    </location>
</feature>
<feature type="strand" evidence="3">
    <location>
        <begin position="284"/>
        <end position="286"/>
    </location>
</feature>
<feature type="helix" evidence="4">
    <location>
        <begin position="288"/>
        <end position="305"/>
    </location>
</feature>
<feature type="strand" evidence="3">
    <location>
        <begin position="311"/>
        <end position="314"/>
    </location>
</feature>
<feature type="helix" evidence="4">
    <location>
        <begin position="319"/>
        <end position="325"/>
    </location>
</feature>
<feature type="strand" evidence="4">
    <location>
        <begin position="329"/>
        <end position="331"/>
    </location>
</feature>
<feature type="turn" evidence="4">
    <location>
        <begin position="332"/>
        <end position="337"/>
    </location>
</feature>
<feature type="helix" evidence="4">
    <location>
        <begin position="338"/>
        <end position="344"/>
    </location>
</feature>
<feature type="helix" evidence="4">
    <location>
        <begin position="346"/>
        <end position="370"/>
    </location>
</feature>
<feature type="strand" evidence="3">
    <location>
        <begin position="377"/>
        <end position="380"/>
    </location>
</feature>
<feature type="helix" evidence="4">
    <location>
        <begin position="381"/>
        <end position="412"/>
    </location>
</feature>
<feature type="turn" evidence="4">
    <location>
        <begin position="416"/>
        <end position="418"/>
    </location>
</feature>
<feature type="strand" evidence="4">
    <location>
        <begin position="420"/>
        <end position="422"/>
    </location>
</feature>
<feature type="helix" evidence="4">
    <location>
        <begin position="423"/>
        <end position="429"/>
    </location>
</feature>
<feature type="helix" evidence="4">
    <location>
        <begin position="431"/>
        <end position="461"/>
    </location>
</feature>
<feature type="helix" evidence="4">
    <location>
        <begin position="465"/>
        <end position="467"/>
    </location>
</feature>
<feature type="strand" evidence="4">
    <location>
        <begin position="468"/>
        <end position="474"/>
    </location>
</feature>
<feature type="helix" evidence="4">
    <location>
        <begin position="479"/>
        <end position="489"/>
    </location>
</feature>
<feature type="helix" evidence="4">
    <location>
        <begin position="490"/>
        <end position="493"/>
    </location>
</feature>
<feature type="strand" evidence="4">
    <location>
        <begin position="507"/>
        <end position="509"/>
    </location>
</feature>
<feature type="strand" evidence="4">
    <location>
        <begin position="513"/>
        <end position="521"/>
    </location>
</feature>
<feature type="helix" evidence="4">
    <location>
        <begin position="528"/>
        <end position="553"/>
    </location>
</feature>
<feature type="helix" evidence="4">
    <location>
        <begin position="564"/>
        <end position="567"/>
    </location>
</feature>
<feature type="strand" evidence="2">
    <location>
        <begin position="572"/>
        <end position="574"/>
    </location>
</feature>
<feature type="helix" evidence="4">
    <location>
        <begin position="586"/>
        <end position="615"/>
    </location>
</feature>
<feature type="strand" evidence="4">
    <location>
        <begin position="618"/>
        <end position="620"/>
    </location>
</feature>
<feature type="helix" evidence="4">
    <location>
        <begin position="622"/>
        <end position="624"/>
    </location>
</feature>
<feature type="strand" evidence="4">
    <location>
        <begin position="626"/>
        <end position="630"/>
    </location>
</feature>
<feature type="helix" evidence="4">
    <location>
        <begin position="634"/>
        <end position="637"/>
    </location>
</feature>
<feature type="helix" evidence="4">
    <location>
        <begin position="641"/>
        <end position="647"/>
    </location>
</feature>
<feature type="helix" evidence="4">
    <location>
        <begin position="649"/>
        <end position="652"/>
    </location>
</feature>
<feature type="helix" evidence="4">
    <location>
        <begin position="654"/>
        <end position="657"/>
    </location>
</feature>
<feature type="helix" evidence="4">
    <location>
        <begin position="665"/>
        <end position="685"/>
    </location>
</feature>
<feature type="helix" evidence="4">
    <location>
        <begin position="689"/>
        <end position="705"/>
    </location>
</feature>
<feature type="strand" evidence="4">
    <location>
        <begin position="711"/>
        <end position="713"/>
    </location>
</feature>
<feature type="helix" evidence="4">
    <location>
        <begin position="719"/>
        <end position="749"/>
    </location>
</feature>
<dbReference type="EC" id="1.97.1.12" evidence="1"/>
<dbReference type="EMBL" id="AB078009">
    <property type="protein sequence ID" value="BAC05488.1"/>
    <property type="molecule type" value="Genomic_DNA"/>
</dbReference>
<dbReference type="EMBL" id="AP005672">
    <property type="protein sequence ID" value="BAC85052.1"/>
    <property type="molecule type" value="Genomic_DNA"/>
</dbReference>
<dbReference type="RefSeq" id="NP_904202.1">
    <property type="nucleotide sequence ID" value="NC_005087.2"/>
</dbReference>
<dbReference type="PDB" id="6L35">
    <property type="method" value="EM"/>
    <property type="resolution" value="3.23 A"/>
    <property type="chains" value="A=9-750"/>
</dbReference>
<dbReference type="PDB" id="7KSQ">
    <property type="method" value="EM"/>
    <property type="resolution" value="2.80 A"/>
    <property type="chains" value="A=9-750"/>
</dbReference>
<dbReference type="PDB" id="7KUX">
    <property type="method" value="EM"/>
    <property type="resolution" value="2.80 A"/>
    <property type="chains" value="A=9-750"/>
</dbReference>
<dbReference type="PDB" id="7XQP">
    <property type="method" value="EM"/>
    <property type="resolution" value="2.68 A"/>
    <property type="chains" value="A=9-750"/>
</dbReference>
<dbReference type="PDB" id="8HTU">
    <property type="method" value="EM"/>
    <property type="resolution" value="2.87 A"/>
    <property type="chains" value="A=1-750"/>
</dbReference>
<dbReference type="PDBsum" id="6L35"/>
<dbReference type="PDBsum" id="7KSQ"/>
<dbReference type="PDBsum" id="7KUX"/>
<dbReference type="PDBsum" id="7XQP"/>
<dbReference type="PDBsum" id="8HTU"/>
<dbReference type="EMDB" id="EMD-0821"/>
<dbReference type="EMDB" id="EMD-23023"/>
<dbReference type="EMDB" id="EMD-23040"/>
<dbReference type="EMDB" id="EMD-33401"/>
<dbReference type="EMDB" id="EMD-35018"/>
<dbReference type="SMR" id="Q8MFA3"/>
<dbReference type="FunCoup" id="Q8MFA3">
    <property type="interactions" value="426"/>
</dbReference>
<dbReference type="STRING" id="3218.Q8MFA3"/>
<dbReference type="GeneID" id="2546733"/>
<dbReference type="KEGG" id="ppp:2546733"/>
<dbReference type="InParanoid" id="Q8MFA3"/>
<dbReference type="OrthoDB" id="1871948at2759"/>
<dbReference type="Proteomes" id="UP000006727">
    <property type="component" value="Chloroplast"/>
</dbReference>
<dbReference type="GO" id="GO:0009535">
    <property type="term" value="C:chloroplast thylakoid membrane"/>
    <property type="evidence" value="ECO:0007669"/>
    <property type="project" value="UniProtKB-SubCell"/>
</dbReference>
<dbReference type="GO" id="GO:0009522">
    <property type="term" value="C:photosystem I"/>
    <property type="evidence" value="ECO:0007669"/>
    <property type="project" value="UniProtKB-KW"/>
</dbReference>
<dbReference type="GO" id="GO:0051539">
    <property type="term" value="F:4 iron, 4 sulfur cluster binding"/>
    <property type="evidence" value="ECO:0007669"/>
    <property type="project" value="UniProtKB-KW"/>
</dbReference>
<dbReference type="GO" id="GO:0016168">
    <property type="term" value="F:chlorophyll binding"/>
    <property type="evidence" value="ECO:0007669"/>
    <property type="project" value="UniProtKB-KW"/>
</dbReference>
<dbReference type="GO" id="GO:0009055">
    <property type="term" value="F:electron transfer activity"/>
    <property type="evidence" value="ECO:0007669"/>
    <property type="project" value="UniProtKB-UniRule"/>
</dbReference>
<dbReference type="GO" id="GO:0000287">
    <property type="term" value="F:magnesium ion binding"/>
    <property type="evidence" value="ECO:0007669"/>
    <property type="project" value="UniProtKB-UniRule"/>
</dbReference>
<dbReference type="GO" id="GO:0016491">
    <property type="term" value="F:oxidoreductase activity"/>
    <property type="evidence" value="ECO:0007669"/>
    <property type="project" value="UniProtKB-KW"/>
</dbReference>
<dbReference type="GO" id="GO:0015979">
    <property type="term" value="P:photosynthesis"/>
    <property type="evidence" value="ECO:0007669"/>
    <property type="project" value="UniProtKB-UniRule"/>
</dbReference>
<dbReference type="FunFam" id="1.20.1130.10:FF:000001">
    <property type="entry name" value="Photosystem I P700 chlorophyll a apoprotein A2"/>
    <property type="match status" value="1"/>
</dbReference>
<dbReference type="Gene3D" id="1.20.1130.10">
    <property type="entry name" value="Photosystem I PsaA/PsaB"/>
    <property type="match status" value="1"/>
</dbReference>
<dbReference type="HAMAP" id="MF_00458">
    <property type="entry name" value="PSI_PsaA"/>
    <property type="match status" value="1"/>
</dbReference>
<dbReference type="InterPro" id="IPR006243">
    <property type="entry name" value="PSI_PsaA"/>
</dbReference>
<dbReference type="InterPro" id="IPR001280">
    <property type="entry name" value="PSI_PsaA/B"/>
</dbReference>
<dbReference type="InterPro" id="IPR020586">
    <property type="entry name" value="PSI_PsaA/B_CS"/>
</dbReference>
<dbReference type="InterPro" id="IPR036408">
    <property type="entry name" value="PSI_PsaA/B_sf"/>
</dbReference>
<dbReference type="NCBIfam" id="TIGR01335">
    <property type="entry name" value="psaA"/>
    <property type="match status" value="1"/>
</dbReference>
<dbReference type="PANTHER" id="PTHR30128">
    <property type="entry name" value="OUTER MEMBRANE PROTEIN, OMPA-RELATED"/>
    <property type="match status" value="1"/>
</dbReference>
<dbReference type="PANTHER" id="PTHR30128:SF19">
    <property type="entry name" value="PHOTOSYSTEM I P700 CHLOROPHYLL A APOPROTEIN A1-RELATED"/>
    <property type="match status" value="1"/>
</dbReference>
<dbReference type="Pfam" id="PF00223">
    <property type="entry name" value="PsaA_PsaB"/>
    <property type="match status" value="1"/>
</dbReference>
<dbReference type="PIRSF" id="PIRSF002905">
    <property type="entry name" value="PSI_A"/>
    <property type="match status" value="1"/>
</dbReference>
<dbReference type="PRINTS" id="PR00257">
    <property type="entry name" value="PHOTSYSPSAAB"/>
</dbReference>
<dbReference type="SUPFAM" id="SSF81558">
    <property type="entry name" value="Photosystem I subunits PsaA/PsaB"/>
    <property type="match status" value="1"/>
</dbReference>
<dbReference type="PROSITE" id="PS00419">
    <property type="entry name" value="PHOTOSYSTEM_I_PSAAB"/>
    <property type="match status" value="1"/>
</dbReference>
<organism>
    <name type="scientific">Physcomitrium patens</name>
    <name type="common">Spreading-leaved earth moss</name>
    <name type="synonym">Physcomitrella patens</name>
    <dbReference type="NCBI Taxonomy" id="3218"/>
    <lineage>
        <taxon>Eukaryota</taxon>
        <taxon>Viridiplantae</taxon>
        <taxon>Streptophyta</taxon>
        <taxon>Embryophyta</taxon>
        <taxon>Bryophyta</taxon>
        <taxon>Bryophytina</taxon>
        <taxon>Bryopsida</taxon>
        <taxon>Funariidae</taxon>
        <taxon>Funariales</taxon>
        <taxon>Funariaceae</taxon>
        <taxon>Physcomitrium</taxon>
    </lineage>
</organism>